<reference key="1">
    <citation type="journal article" date="1999" name="Endocrinology">
        <title>A novel gene overexpressed in the prostate of castrated rats: hormonal regulation, relationship to apoptosis and to acquired prostatic cell androgen independence.</title>
        <authorList>
            <person name="Bruyninx M."/>
            <person name="Hennuy B."/>
            <person name="Cornet A."/>
            <person name="Houssa P."/>
            <person name="Daukandt M."/>
            <person name="Reiter E."/>
            <person name="Poncin J."/>
            <person name="Closset J."/>
            <person name="Hennen G."/>
        </authorList>
    </citation>
    <scope>NUCLEOTIDE SEQUENCE [MRNA]</scope>
    <scope>FUNCTION</scope>
    <scope>INDUCTION</scope>
    <source>
        <strain>Wistar</strain>
    </source>
</reference>
<reference key="2">
    <citation type="journal article" date="2004" name="Genome Res.">
        <title>The status, quality, and expansion of the NIH full-length cDNA project: the Mammalian Gene Collection (MGC).</title>
        <authorList>
            <consortium name="The MGC Project Team"/>
        </authorList>
    </citation>
    <scope>NUCLEOTIDE SEQUENCE [LARGE SCALE MRNA]</scope>
    <source>
        <tissue>Pituitary</tissue>
    </source>
</reference>
<reference key="3">
    <citation type="journal article" date="2003" name="Prostate">
        <title>Prostatic androgen repressed message-1 (PARM-1) may play a role in prostatic cell immortalisation.</title>
        <authorList>
            <person name="Cornet A.M."/>
            <person name="Hanon E."/>
            <person name="Reiter E.R."/>
            <person name="Bruyninx M."/>
            <person name="Nguyen V.H."/>
            <person name="Hennuy B.R."/>
            <person name="Hennen G.P."/>
            <person name="Closset J.L."/>
        </authorList>
    </citation>
    <scope>FUNCTION</scope>
    <scope>TISSUE SPECIFICITY</scope>
    <source>
        <strain>Wistar</strain>
    </source>
</reference>
<reference key="4">
    <citation type="journal article" date="2012" name="Nat. Commun.">
        <title>Quantitative maps of protein phosphorylation sites across 14 different rat organs and tissues.</title>
        <authorList>
            <person name="Lundby A."/>
            <person name="Secher A."/>
            <person name="Lage K."/>
            <person name="Nordsborg N.B."/>
            <person name="Dmytriyev A."/>
            <person name="Lundby C."/>
            <person name="Olsen J.V."/>
        </authorList>
    </citation>
    <scope>PHOSPHORYLATION [LARGE SCALE ANALYSIS] AT SER-284</scope>
    <scope>IDENTIFICATION BY MASS SPECTROMETRY [LARGE SCALE ANALYSIS]</scope>
</reference>
<evidence type="ECO:0000250" key="1"/>
<evidence type="ECO:0000255" key="2"/>
<evidence type="ECO:0000256" key="3">
    <source>
        <dbReference type="SAM" id="MobiDB-lite"/>
    </source>
</evidence>
<evidence type="ECO:0000269" key="4">
    <source>
    </source>
</evidence>
<evidence type="ECO:0000269" key="5">
    <source>
    </source>
</evidence>
<evidence type="ECO:0000305" key="6"/>
<evidence type="ECO:0007744" key="7">
    <source>
    </source>
</evidence>
<accession>Q6P9X9</accession>
<accession>Q9Z0P0</accession>
<sequence>MVCKALITLCIFAAGLRVQGSPTPTLLPVSLTTKSTAPMATWTTSAQHTAMATTPVASATHNASVLRTTAASLTSQLPTHPREEAVTSPPLKREVNSTDSSPTGFSSNSSGIHLAPTPEEHSLGSPETSVPATGSQSPTLLFSQGPTSASTSPATSPSEPLSASVTSNHSSTVNNIQPTGAPMAPASPTEEHSSSHTPTSHVTEPVPKEKSPQDTEPGKVICESETTTPFLIMQEVENALSSGSIAAITVTVIAVVLLVFGAAAYLKIRHSSYGRLLDDHDYGSWGNYNNPLYDDS</sequence>
<protein>
    <recommendedName>
        <fullName>Prostate androgen-regulated mucin-like protein 1 homolog</fullName>
        <shortName>PARM-1</shortName>
    </recommendedName>
    <alternativeName>
        <fullName>Castration-induced prostatic apoptosis-related protein 1</fullName>
        <shortName>CIPAR-1</shortName>
    </alternativeName>
    <alternativeName>
        <fullName>Prostatic androgen-repressed message 1 protein</fullName>
    </alternativeName>
</protein>
<proteinExistence type="evidence at protein level"/>
<organism>
    <name type="scientific">Rattus norvegicus</name>
    <name type="common">Rat</name>
    <dbReference type="NCBI Taxonomy" id="10116"/>
    <lineage>
        <taxon>Eukaryota</taxon>
        <taxon>Metazoa</taxon>
        <taxon>Chordata</taxon>
        <taxon>Craniata</taxon>
        <taxon>Vertebrata</taxon>
        <taxon>Euteleostomi</taxon>
        <taxon>Mammalia</taxon>
        <taxon>Eutheria</taxon>
        <taxon>Euarchontoglires</taxon>
        <taxon>Glires</taxon>
        <taxon>Rodentia</taxon>
        <taxon>Myomorpha</taxon>
        <taxon>Muroidea</taxon>
        <taxon>Muridae</taxon>
        <taxon>Murinae</taxon>
        <taxon>Rattus</taxon>
    </lineage>
</organism>
<gene>
    <name type="primary">Parm1</name>
    <name type="synonym">Cipar1</name>
</gene>
<name>PARM1_RAT</name>
<keyword id="KW-1003">Cell membrane</keyword>
<keyword id="KW-0967">Endosome</keyword>
<keyword id="KW-0325">Glycoprotein</keyword>
<keyword id="KW-0333">Golgi apparatus</keyword>
<keyword id="KW-0472">Membrane</keyword>
<keyword id="KW-0597">Phosphoprotein</keyword>
<keyword id="KW-1185">Reference proteome</keyword>
<keyword id="KW-0732">Signal</keyword>
<keyword id="KW-0812">Transmembrane</keyword>
<keyword id="KW-1133">Transmembrane helix</keyword>
<feature type="signal peptide" evidence="2">
    <location>
        <begin position="1"/>
        <end position="20"/>
    </location>
</feature>
<feature type="chain" id="PRO_0000045501" description="Prostate androgen-regulated mucin-like protein 1 homolog">
    <location>
        <begin position="21"/>
        <end position="296"/>
    </location>
</feature>
<feature type="topological domain" description="Extracellular" evidence="2">
    <location>
        <begin position="21"/>
        <end position="244"/>
    </location>
</feature>
<feature type="transmembrane region" description="Helical" evidence="2">
    <location>
        <begin position="245"/>
        <end position="265"/>
    </location>
</feature>
<feature type="topological domain" description="Cytoplasmic" evidence="2">
    <location>
        <begin position="266"/>
        <end position="296"/>
    </location>
</feature>
<feature type="region of interest" description="Disordered" evidence="3">
    <location>
        <begin position="73"/>
        <end position="220"/>
    </location>
</feature>
<feature type="compositionally biased region" description="Basic and acidic residues" evidence="3">
    <location>
        <begin position="80"/>
        <end position="96"/>
    </location>
</feature>
<feature type="compositionally biased region" description="Low complexity" evidence="3">
    <location>
        <begin position="97"/>
        <end position="111"/>
    </location>
</feature>
<feature type="compositionally biased region" description="Polar residues" evidence="3">
    <location>
        <begin position="125"/>
        <end position="145"/>
    </location>
</feature>
<feature type="compositionally biased region" description="Low complexity" evidence="3">
    <location>
        <begin position="146"/>
        <end position="175"/>
    </location>
</feature>
<feature type="compositionally biased region" description="Low complexity" evidence="3">
    <location>
        <begin position="195"/>
        <end position="205"/>
    </location>
</feature>
<feature type="compositionally biased region" description="Basic and acidic residues" evidence="3">
    <location>
        <begin position="206"/>
        <end position="217"/>
    </location>
</feature>
<feature type="modified residue" description="Phosphoserine" evidence="7">
    <location>
        <position position="284"/>
    </location>
</feature>
<feature type="glycosylation site" description="N-linked (GlcNAc...) asparagine" evidence="2">
    <location>
        <position position="62"/>
    </location>
</feature>
<feature type="glycosylation site" description="N-linked (GlcNAc...) asparagine" evidence="2">
    <location>
        <position position="96"/>
    </location>
</feature>
<feature type="glycosylation site" description="N-linked (GlcNAc...) asparagine" evidence="2">
    <location>
        <position position="108"/>
    </location>
</feature>
<feature type="glycosylation site" description="N-linked (GlcNAc...) asparagine" evidence="2">
    <location>
        <position position="168"/>
    </location>
</feature>
<feature type="sequence conflict" description="In Ref. 1; CAB38095." evidence="6" ref="1">
    <original>R</original>
    <variation>M</variation>
    <location>
        <position position="17"/>
    </location>
</feature>
<feature type="sequence conflict" description="In Ref. 1; CAB38095." evidence="6" ref="1">
    <original>S</original>
    <variation>SGS</variation>
    <location>
        <position position="284"/>
    </location>
</feature>
<dbReference type="EMBL" id="AJ010750">
    <property type="protein sequence ID" value="CAB38095.1"/>
    <property type="molecule type" value="mRNA"/>
</dbReference>
<dbReference type="EMBL" id="BC060539">
    <property type="protein sequence ID" value="AAH60539.1"/>
    <property type="molecule type" value="mRNA"/>
</dbReference>
<dbReference type="RefSeq" id="NP_775137.1">
    <property type="nucleotide sequence ID" value="NM_173114.1"/>
</dbReference>
<dbReference type="FunCoup" id="Q6P9X9">
    <property type="interactions" value="169"/>
</dbReference>
<dbReference type="STRING" id="10116.ENSRNOP00000003472"/>
<dbReference type="GlyCosmos" id="Q6P9X9">
    <property type="glycosylation" value="4 sites, No reported glycans"/>
</dbReference>
<dbReference type="GlyGen" id="Q6P9X9">
    <property type="glycosylation" value="6 sites"/>
</dbReference>
<dbReference type="iPTMnet" id="Q6P9X9"/>
<dbReference type="PhosphoSitePlus" id="Q6P9X9"/>
<dbReference type="PaxDb" id="10116-ENSRNOP00000003472"/>
<dbReference type="GeneID" id="286894"/>
<dbReference type="KEGG" id="rno:286894"/>
<dbReference type="UCSC" id="RGD:708342">
    <property type="organism name" value="rat"/>
</dbReference>
<dbReference type="AGR" id="RGD:708342"/>
<dbReference type="CTD" id="25849"/>
<dbReference type="RGD" id="708342">
    <property type="gene designation" value="Parm1"/>
</dbReference>
<dbReference type="eggNOG" id="ENOG502S50N">
    <property type="taxonomic scope" value="Eukaryota"/>
</dbReference>
<dbReference type="InParanoid" id="Q6P9X9"/>
<dbReference type="PhylomeDB" id="Q6P9X9"/>
<dbReference type="PRO" id="PR:Q6P9X9"/>
<dbReference type="Proteomes" id="UP000002494">
    <property type="component" value="Unplaced"/>
</dbReference>
<dbReference type="GO" id="GO:0005769">
    <property type="term" value="C:early endosome"/>
    <property type="evidence" value="ECO:0000250"/>
    <property type="project" value="UniProtKB"/>
</dbReference>
<dbReference type="GO" id="GO:0010008">
    <property type="term" value="C:endosome membrane"/>
    <property type="evidence" value="ECO:0007669"/>
    <property type="project" value="UniProtKB-SubCell"/>
</dbReference>
<dbReference type="GO" id="GO:0005794">
    <property type="term" value="C:Golgi apparatus"/>
    <property type="evidence" value="ECO:0000250"/>
    <property type="project" value="UniProtKB"/>
</dbReference>
<dbReference type="GO" id="GO:0000139">
    <property type="term" value="C:Golgi membrane"/>
    <property type="evidence" value="ECO:0007669"/>
    <property type="project" value="UniProtKB-SubCell"/>
</dbReference>
<dbReference type="GO" id="GO:0005770">
    <property type="term" value="C:late endosome"/>
    <property type="evidence" value="ECO:0000250"/>
    <property type="project" value="UniProtKB"/>
</dbReference>
<dbReference type="GO" id="GO:0005886">
    <property type="term" value="C:plasma membrane"/>
    <property type="evidence" value="ECO:0000250"/>
    <property type="project" value="UniProtKB"/>
</dbReference>
<dbReference type="InterPro" id="IPR031431">
    <property type="entry name" value="PARM1"/>
</dbReference>
<dbReference type="PANTHER" id="PTHR35453">
    <property type="entry name" value="PROSTATE ANDROGEN-REGULATED MUCIN-LIKE PROTEIN 1"/>
    <property type="match status" value="1"/>
</dbReference>
<dbReference type="PANTHER" id="PTHR35453:SF1">
    <property type="entry name" value="PROSTATE ANDROGEN-REGULATED MUCIN-LIKE PROTEIN 1"/>
    <property type="match status" value="1"/>
</dbReference>
<dbReference type="Pfam" id="PF17061">
    <property type="entry name" value="PARM"/>
    <property type="match status" value="1"/>
</dbReference>
<comment type="function">
    <text evidence="4 5">May regulate TLP1 expression and telomerase activity, thus enabling certain prostatic cells to resist apoptosis.</text>
</comment>
<comment type="subcellular location">
    <subcellularLocation>
        <location evidence="1">Cell membrane</location>
        <topology evidence="1">Single-pass type I membrane protein</topology>
    </subcellularLocation>
    <subcellularLocation>
        <location evidence="1">Golgi apparatus membrane</location>
        <topology evidence="1">Single-pass type I membrane protein</topology>
    </subcellularLocation>
    <subcellularLocation>
        <location evidence="1">Endosome membrane</location>
        <topology evidence="1">Single-pass type I membrane protein</topology>
    </subcellularLocation>
</comment>
<comment type="tissue specificity">
    <text evidence="5">Expressed in prostate. Detected in other organs at low levels, these include the heart and various tissues of the urogenital tract. Not detected in mammary gland.</text>
</comment>
<comment type="induction">
    <text evidence="4">Induced in prostate, after castration. This induction is reversed by androgen supplementation.</text>
</comment>
<comment type="PTM">
    <text evidence="1">Highly N-glycosylated and O-glycosylated.</text>
</comment>
<comment type="similarity">
    <text evidence="6">Belongs to the PARM family.</text>
</comment>